<gene>
    <name evidence="1" type="primary">fabZ</name>
    <name type="ordered locus">BCG9842_B5551</name>
</gene>
<protein>
    <recommendedName>
        <fullName evidence="1">3-hydroxyacyl-[acyl-carrier-protein] dehydratase FabZ</fullName>
        <ecNumber evidence="1">4.2.1.59</ecNumber>
    </recommendedName>
    <alternativeName>
        <fullName evidence="1">(3R)-hydroxymyristoyl-[acyl-carrier-protein] dehydratase</fullName>
        <shortName evidence="1">(3R)-hydroxymyristoyl-ACP dehydrase</shortName>
    </alternativeName>
    <alternativeName>
        <fullName evidence="1">Beta-hydroxyacyl-ACP dehydratase</fullName>
    </alternativeName>
</protein>
<comment type="function">
    <text evidence="1">Involved in unsaturated fatty acids biosynthesis. Catalyzes the dehydration of short chain beta-hydroxyacyl-ACPs and long chain saturated and unsaturated beta-hydroxyacyl-ACPs.</text>
</comment>
<comment type="catalytic activity">
    <reaction evidence="1">
        <text>a (3R)-hydroxyacyl-[ACP] = a (2E)-enoyl-[ACP] + H2O</text>
        <dbReference type="Rhea" id="RHEA:13097"/>
        <dbReference type="Rhea" id="RHEA-COMP:9925"/>
        <dbReference type="Rhea" id="RHEA-COMP:9945"/>
        <dbReference type="ChEBI" id="CHEBI:15377"/>
        <dbReference type="ChEBI" id="CHEBI:78784"/>
        <dbReference type="ChEBI" id="CHEBI:78827"/>
        <dbReference type="EC" id="4.2.1.59"/>
    </reaction>
</comment>
<comment type="subcellular location">
    <subcellularLocation>
        <location evidence="1">Cytoplasm</location>
    </subcellularLocation>
</comment>
<comment type="similarity">
    <text evidence="1">Belongs to the thioester dehydratase family. FabZ subfamily.</text>
</comment>
<sequence>MLNIEQIKEIIPHRYPFLLVDKILEVDEGKRAVGIKNVSANEEFFNGHFPDYAVMPGVLIVEALAQVGAVAVLKKEENRGRLAFFAGIDNCRFKKQVRPGDQLRLEVEMTRVRGPIGKGKAIATVDGEVACEAEITFAIGDKKE</sequence>
<reference key="1">
    <citation type="submission" date="2008-10" db="EMBL/GenBank/DDBJ databases">
        <title>Genome sequence of Bacillus cereus G9842.</title>
        <authorList>
            <person name="Dodson R.J."/>
            <person name="Durkin A.S."/>
            <person name="Rosovitz M.J."/>
            <person name="Rasko D.A."/>
            <person name="Hoffmaster A."/>
            <person name="Ravel J."/>
            <person name="Sutton G."/>
        </authorList>
    </citation>
    <scope>NUCLEOTIDE SEQUENCE [LARGE SCALE GENOMIC DNA]</scope>
    <source>
        <strain>G9842</strain>
    </source>
</reference>
<organism>
    <name type="scientific">Bacillus cereus (strain G9842)</name>
    <dbReference type="NCBI Taxonomy" id="405531"/>
    <lineage>
        <taxon>Bacteria</taxon>
        <taxon>Bacillati</taxon>
        <taxon>Bacillota</taxon>
        <taxon>Bacilli</taxon>
        <taxon>Bacillales</taxon>
        <taxon>Bacillaceae</taxon>
        <taxon>Bacillus</taxon>
        <taxon>Bacillus cereus group</taxon>
    </lineage>
</organism>
<feature type="chain" id="PRO_1000197277" description="3-hydroxyacyl-[acyl-carrier-protein] dehydratase FabZ">
    <location>
        <begin position="1"/>
        <end position="144"/>
    </location>
</feature>
<feature type="active site" evidence="1">
    <location>
        <position position="48"/>
    </location>
</feature>
<accession>B7IQT1</accession>
<name>FABZ_BACC2</name>
<dbReference type="EC" id="4.2.1.59" evidence="1"/>
<dbReference type="EMBL" id="CP001186">
    <property type="protein sequence ID" value="ACK97880.1"/>
    <property type="molecule type" value="Genomic_DNA"/>
</dbReference>
<dbReference type="RefSeq" id="WP_000931959.1">
    <property type="nucleotide sequence ID" value="NC_011772.1"/>
</dbReference>
<dbReference type="SMR" id="B7IQT1"/>
<dbReference type="GeneID" id="75088464"/>
<dbReference type="KEGG" id="bcg:BCG9842_B5551"/>
<dbReference type="HOGENOM" id="CLU_078912_3_0_9"/>
<dbReference type="Proteomes" id="UP000006744">
    <property type="component" value="Chromosome"/>
</dbReference>
<dbReference type="GO" id="GO:0005737">
    <property type="term" value="C:cytoplasm"/>
    <property type="evidence" value="ECO:0007669"/>
    <property type="project" value="UniProtKB-SubCell"/>
</dbReference>
<dbReference type="GO" id="GO:0016020">
    <property type="term" value="C:membrane"/>
    <property type="evidence" value="ECO:0007669"/>
    <property type="project" value="GOC"/>
</dbReference>
<dbReference type="GO" id="GO:0019171">
    <property type="term" value="F:(3R)-hydroxyacyl-[acyl-carrier-protein] dehydratase activity"/>
    <property type="evidence" value="ECO:0007669"/>
    <property type="project" value="UniProtKB-EC"/>
</dbReference>
<dbReference type="GO" id="GO:0006633">
    <property type="term" value="P:fatty acid biosynthetic process"/>
    <property type="evidence" value="ECO:0007669"/>
    <property type="project" value="UniProtKB-UniRule"/>
</dbReference>
<dbReference type="GO" id="GO:0009245">
    <property type="term" value="P:lipid A biosynthetic process"/>
    <property type="evidence" value="ECO:0007669"/>
    <property type="project" value="UniProtKB-UniRule"/>
</dbReference>
<dbReference type="CDD" id="cd01288">
    <property type="entry name" value="FabZ"/>
    <property type="match status" value="1"/>
</dbReference>
<dbReference type="FunFam" id="3.10.129.10:FF:000001">
    <property type="entry name" value="3-hydroxyacyl-[acyl-carrier-protein] dehydratase FabZ"/>
    <property type="match status" value="1"/>
</dbReference>
<dbReference type="Gene3D" id="3.10.129.10">
    <property type="entry name" value="Hotdog Thioesterase"/>
    <property type="match status" value="1"/>
</dbReference>
<dbReference type="HAMAP" id="MF_00406">
    <property type="entry name" value="FabZ"/>
    <property type="match status" value="1"/>
</dbReference>
<dbReference type="InterPro" id="IPR013114">
    <property type="entry name" value="FabA_FabZ"/>
</dbReference>
<dbReference type="InterPro" id="IPR010084">
    <property type="entry name" value="FabZ"/>
</dbReference>
<dbReference type="InterPro" id="IPR029069">
    <property type="entry name" value="HotDog_dom_sf"/>
</dbReference>
<dbReference type="NCBIfam" id="TIGR01750">
    <property type="entry name" value="fabZ"/>
    <property type="match status" value="1"/>
</dbReference>
<dbReference type="NCBIfam" id="NF000582">
    <property type="entry name" value="PRK00006.1"/>
    <property type="match status" value="1"/>
</dbReference>
<dbReference type="PANTHER" id="PTHR30272">
    <property type="entry name" value="3-HYDROXYACYL-[ACYL-CARRIER-PROTEIN] DEHYDRATASE"/>
    <property type="match status" value="1"/>
</dbReference>
<dbReference type="PANTHER" id="PTHR30272:SF1">
    <property type="entry name" value="3-HYDROXYACYL-[ACYL-CARRIER-PROTEIN] DEHYDRATASE"/>
    <property type="match status" value="1"/>
</dbReference>
<dbReference type="Pfam" id="PF07977">
    <property type="entry name" value="FabA"/>
    <property type="match status" value="1"/>
</dbReference>
<dbReference type="SUPFAM" id="SSF54637">
    <property type="entry name" value="Thioesterase/thiol ester dehydrase-isomerase"/>
    <property type="match status" value="1"/>
</dbReference>
<evidence type="ECO:0000255" key="1">
    <source>
        <dbReference type="HAMAP-Rule" id="MF_00406"/>
    </source>
</evidence>
<proteinExistence type="inferred from homology"/>
<keyword id="KW-0963">Cytoplasm</keyword>
<keyword id="KW-0441">Lipid A biosynthesis</keyword>
<keyword id="KW-0444">Lipid biosynthesis</keyword>
<keyword id="KW-0443">Lipid metabolism</keyword>
<keyword id="KW-0456">Lyase</keyword>